<keyword id="KW-0067">ATP-binding</keyword>
<keyword id="KW-0315">Glutamine amidotransferase</keyword>
<keyword id="KW-0436">Ligase</keyword>
<keyword id="KW-0460">Magnesium</keyword>
<keyword id="KW-0479">Metal-binding</keyword>
<keyword id="KW-0547">Nucleotide-binding</keyword>
<keyword id="KW-0665">Pyrimidine biosynthesis</keyword>
<proteinExistence type="inferred from homology"/>
<name>PYRG_VIBC1</name>
<protein>
    <recommendedName>
        <fullName evidence="1">CTP synthase</fullName>
        <ecNumber evidence="1">6.3.4.2</ecNumber>
    </recommendedName>
    <alternativeName>
        <fullName evidence="1">Cytidine 5'-triphosphate synthase</fullName>
    </alternativeName>
    <alternativeName>
        <fullName evidence="1">Cytidine triphosphate synthetase</fullName>
        <shortName evidence="1">CTP synthetase</shortName>
        <shortName evidence="1">CTPS</shortName>
    </alternativeName>
    <alternativeName>
        <fullName evidence="1">UTP--ammonia ligase</fullName>
    </alternativeName>
</protein>
<gene>
    <name evidence="1" type="primary">pyrG</name>
    <name type="ordered locus">VIBHAR_03526</name>
</gene>
<sequence>MTTNYIFVTGGVVSSLGKGIAAASLAAILEARGLKVTMMKLDPYINVDPGTMSPTQHGEVFVTEDGAETDLDLGHYERFIRTKMTKRNNFTAGRVYADVLRKERRGDYLGATIQVIPHITNAIKDRVIAGSEGHDVAIVEVGGTVGDIESLPFMEAIRQLAVELGRERAMFMHLTLVPYLAAAGEVKTKPTQHSVKELLSIGIQPDILVCRSDRMIPANERKKIALFCNVQEKAVISMKDVDSIYKIPQLVKSQGLDDLVCARFGINAPEADLSEWEQVIYEEANPTGEVTIGMVGKYIELPDAYKSVNEALKHAGLKNRLNVTIKYVDSQDVETKGVEVLEGLDAILVPGGFGDRGIEGKIRAAQYARENKVPYLGICLGMQVALIEYARNVAGMEGAHSTEFNKDTKYPVVGLITEWVDGEGKVEERTETSDLGGTMRLGSQLCHLEKGTKARELYGNATIHERHRHRYEVNNNLRPQIEKAGLKVSGLSADKKLVEMIENPAHPWFVAAQFHPEFTSTPRDGHPLFAGFVKAAGQNARGEFEK</sequence>
<feature type="chain" id="PRO_1000139601" description="CTP synthase">
    <location>
        <begin position="1"/>
        <end position="546"/>
    </location>
</feature>
<feature type="domain" description="Glutamine amidotransferase type-1" evidence="1">
    <location>
        <begin position="291"/>
        <end position="542"/>
    </location>
</feature>
<feature type="region of interest" description="Amidoligase domain" evidence="1">
    <location>
        <begin position="1"/>
        <end position="266"/>
    </location>
</feature>
<feature type="active site" description="Nucleophile; for glutamine hydrolysis" evidence="1">
    <location>
        <position position="379"/>
    </location>
</feature>
<feature type="active site" evidence="1">
    <location>
        <position position="515"/>
    </location>
</feature>
<feature type="active site" evidence="1">
    <location>
        <position position="517"/>
    </location>
</feature>
<feature type="binding site" evidence="1">
    <location>
        <position position="14"/>
    </location>
    <ligand>
        <name>CTP</name>
        <dbReference type="ChEBI" id="CHEBI:37563"/>
        <note>allosteric inhibitor</note>
    </ligand>
</feature>
<feature type="binding site" evidence="1">
    <location>
        <position position="14"/>
    </location>
    <ligand>
        <name>UTP</name>
        <dbReference type="ChEBI" id="CHEBI:46398"/>
    </ligand>
</feature>
<feature type="binding site" evidence="1">
    <location>
        <begin position="15"/>
        <end position="20"/>
    </location>
    <ligand>
        <name>ATP</name>
        <dbReference type="ChEBI" id="CHEBI:30616"/>
    </ligand>
</feature>
<feature type="binding site" evidence="1">
    <location>
        <position position="72"/>
    </location>
    <ligand>
        <name>ATP</name>
        <dbReference type="ChEBI" id="CHEBI:30616"/>
    </ligand>
</feature>
<feature type="binding site" evidence="1">
    <location>
        <position position="72"/>
    </location>
    <ligand>
        <name>Mg(2+)</name>
        <dbReference type="ChEBI" id="CHEBI:18420"/>
    </ligand>
</feature>
<feature type="binding site" evidence="1">
    <location>
        <position position="140"/>
    </location>
    <ligand>
        <name>Mg(2+)</name>
        <dbReference type="ChEBI" id="CHEBI:18420"/>
    </ligand>
</feature>
<feature type="binding site" evidence="1">
    <location>
        <begin position="147"/>
        <end position="149"/>
    </location>
    <ligand>
        <name>CTP</name>
        <dbReference type="ChEBI" id="CHEBI:37563"/>
        <note>allosteric inhibitor</note>
    </ligand>
</feature>
<feature type="binding site" evidence="1">
    <location>
        <begin position="187"/>
        <end position="192"/>
    </location>
    <ligand>
        <name>CTP</name>
        <dbReference type="ChEBI" id="CHEBI:37563"/>
        <note>allosteric inhibitor</note>
    </ligand>
</feature>
<feature type="binding site" evidence="1">
    <location>
        <begin position="187"/>
        <end position="192"/>
    </location>
    <ligand>
        <name>UTP</name>
        <dbReference type="ChEBI" id="CHEBI:46398"/>
    </ligand>
</feature>
<feature type="binding site" evidence="1">
    <location>
        <position position="223"/>
    </location>
    <ligand>
        <name>CTP</name>
        <dbReference type="ChEBI" id="CHEBI:37563"/>
        <note>allosteric inhibitor</note>
    </ligand>
</feature>
<feature type="binding site" evidence="1">
    <location>
        <position position="223"/>
    </location>
    <ligand>
        <name>UTP</name>
        <dbReference type="ChEBI" id="CHEBI:46398"/>
    </ligand>
</feature>
<feature type="binding site" evidence="1">
    <location>
        <begin position="239"/>
        <end position="241"/>
    </location>
    <ligand>
        <name>ATP</name>
        <dbReference type="ChEBI" id="CHEBI:30616"/>
    </ligand>
</feature>
<feature type="binding site" evidence="1">
    <location>
        <position position="352"/>
    </location>
    <ligand>
        <name>L-glutamine</name>
        <dbReference type="ChEBI" id="CHEBI:58359"/>
    </ligand>
</feature>
<feature type="binding site" evidence="1">
    <location>
        <begin position="380"/>
        <end position="383"/>
    </location>
    <ligand>
        <name>L-glutamine</name>
        <dbReference type="ChEBI" id="CHEBI:58359"/>
    </ligand>
</feature>
<feature type="binding site" evidence="1">
    <location>
        <position position="403"/>
    </location>
    <ligand>
        <name>L-glutamine</name>
        <dbReference type="ChEBI" id="CHEBI:58359"/>
    </ligand>
</feature>
<feature type="binding site" evidence="1">
    <location>
        <position position="470"/>
    </location>
    <ligand>
        <name>L-glutamine</name>
        <dbReference type="ChEBI" id="CHEBI:58359"/>
    </ligand>
</feature>
<accession>A7MTS6</accession>
<dbReference type="EC" id="6.3.4.2" evidence="1"/>
<dbReference type="EMBL" id="CP000789">
    <property type="protein sequence ID" value="ABU72462.1"/>
    <property type="molecule type" value="Genomic_DNA"/>
</dbReference>
<dbReference type="RefSeq" id="WP_005531665.1">
    <property type="nucleotide sequence ID" value="NC_022269.1"/>
</dbReference>
<dbReference type="SMR" id="A7MTS6"/>
<dbReference type="KEGG" id="vha:VIBHAR_03526"/>
<dbReference type="PATRIC" id="fig|338187.25.peg.2684"/>
<dbReference type="UniPathway" id="UPA00159">
    <property type="reaction ID" value="UER00277"/>
</dbReference>
<dbReference type="Proteomes" id="UP000008152">
    <property type="component" value="Chromosome I"/>
</dbReference>
<dbReference type="GO" id="GO:0005829">
    <property type="term" value="C:cytosol"/>
    <property type="evidence" value="ECO:0007669"/>
    <property type="project" value="TreeGrafter"/>
</dbReference>
<dbReference type="GO" id="GO:0005524">
    <property type="term" value="F:ATP binding"/>
    <property type="evidence" value="ECO:0007669"/>
    <property type="project" value="UniProtKB-KW"/>
</dbReference>
<dbReference type="GO" id="GO:0003883">
    <property type="term" value="F:CTP synthase activity"/>
    <property type="evidence" value="ECO:0007669"/>
    <property type="project" value="UniProtKB-UniRule"/>
</dbReference>
<dbReference type="GO" id="GO:0004359">
    <property type="term" value="F:glutaminase activity"/>
    <property type="evidence" value="ECO:0007669"/>
    <property type="project" value="RHEA"/>
</dbReference>
<dbReference type="GO" id="GO:0042802">
    <property type="term" value="F:identical protein binding"/>
    <property type="evidence" value="ECO:0007669"/>
    <property type="project" value="TreeGrafter"/>
</dbReference>
<dbReference type="GO" id="GO:0046872">
    <property type="term" value="F:metal ion binding"/>
    <property type="evidence" value="ECO:0007669"/>
    <property type="project" value="UniProtKB-KW"/>
</dbReference>
<dbReference type="GO" id="GO:0044210">
    <property type="term" value="P:'de novo' CTP biosynthetic process"/>
    <property type="evidence" value="ECO:0007669"/>
    <property type="project" value="UniProtKB-UniRule"/>
</dbReference>
<dbReference type="GO" id="GO:0019856">
    <property type="term" value="P:pyrimidine nucleobase biosynthetic process"/>
    <property type="evidence" value="ECO:0007669"/>
    <property type="project" value="TreeGrafter"/>
</dbReference>
<dbReference type="CDD" id="cd03113">
    <property type="entry name" value="CTPS_N"/>
    <property type="match status" value="1"/>
</dbReference>
<dbReference type="CDD" id="cd01746">
    <property type="entry name" value="GATase1_CTP_Synthase"/>
    <property type="match status" value="1"/>
</dbReference>
<dbReference type="FunFam" id="3.40.50.300:FF:000009">
    <property type="entry name" value="CTP synthase"/>
    <property type="match status" value="1"/>
</dbReference>
<dbReference type="FunFam" id="3.40.50.880:FF:000002">
    <property type="entry name" value="CTP synthase"/>
    <property type="match status" value="1"/>
</dbReference>
<dbReference type="Gene3D" id="3.40.50.880">
    <property type="match status" value="1"/>
</dbReference>
<dbReference type="Gene3D" id="3.40.50.300">
    <property type="entry name" value="P-loop containing nucleotide triphosphate hydrolases"/>
    <property type="match status" value="1"/>
</dbReference>
<dbReference type="HAMAP" id="MF_01227">
    <property type="entry name" value="PyrG"/>
    <property type="match status" value="1"/>
</dbReference>
<dbReference type="InterPro" id="IPR029062">
    <property type="entry name" value="Class_I_gatase-like"/>
</dbReference>
<dbReference type="InterPro" id="IPR004468">
    <property type="entry name" value="CTP_synthase"/>
</dbReference>
<dbReference type="InterPro" id="IPR017456">
    <property type="entry name" value="CTP_synthase_N"/>
</dbReference>
<dbReference type="InterPro" id="IPR017926">
    <property type="entry name" value="GATASE"/>
</dbReference>
<dbReference type="InterPro" id="IPR033828">
    <property type="entry name" value="GATase1_CTP_Synthase"/>
</dbReference>
<dbReference type="InterPro" id="IPR027417">
    <property type="entry name" value="P-loop_NTPase"/>
</dbReference>
<dbReference type="NCBIfam" id="NF003792">
    <property type="entry name" value="PRK05380.1"/>
    <property type="match status" value="1"/>
</dbReference>
<dbReference type="NCBIfam" id="TIGR00337">
    <property type="entry name" value="PyrG"/>
    <property type="match status" value="1"/>
</dbReference>
<dbReference type="PANTHER" id="PTHR11550">
    <property type="entry name" value="CTP SYNTHASE"/>
    <property type="match status" value="1"/>
</dbReference>
<dbReference type="PANTHER" id="PTHR11550:SF0">
    <property type="entry name" value="CTP SYNTHASE-RELATED"/>
    <property type="match status" value="1"/>
</dbReference>
<dbReference type="Pfam" id="PF06418">
    <property type="entry name" value="CTP_synth_N"/>
    <property type="match status" value="1"/>
</dbReference>
<dbReference type="Pfam" id="PF00117">
    <property type="entry name" value="GATase"/>
    <property type="match status" value="1"/>
</dbReference>
<dbReference type="SUPFAM" id="SSF52317">
    <property type="entry name" value="Class I glutamine amidotransferase-like"/>
    <property type="match status" value="1"/>
</dbReference>
<dbReference type="SUPFAM" id="SSF52540">
    <property type="entry name" value="P-loop containing nucleoside triphosphate hydrolases"/>
    <property type="match status" value="1"/>
</dbReference>
<dbReference type="PROSITE" id="PS51273">
    <property type="entry name" value="GATASE_TYPE_1"/>
    <property type="match status" value="1"/>
</dbReference>
<reference key="1">
    <citation type="submission" date="2007-08" db="EMBL/GenBank/DDBJ databases">
        <authorList>
            <consortium name="The Vibrio harveyi Genome Sequencing Project"/>
            <person name="Bassler B."/>
            <person name="Clifton S.W."/>
            <person name="Fulton L."/>
            <person name="Delehaunty K."/>
            <person name="Fronick C."/>
            <person name="Harrison M."/>
            <person name="Markivic C."/>
            <person name="Fulton R."/>
            <person name="Tin-Wollam A.-M."/>
            <person name="Shah N."/>
            <person name="Pepin K."/>
            <person name="Nash W."/>
            <person name="Thiruvilangam P."/>
            <person name="Bhonagiri V."/>
            <person name="Waters C."/>
            <person name="Tu K.C."/>
            <person name="Irgon J."/>
            <person name="Wilson R.K."/>
        </authorList>
    </citation>
    <scope>NUCLEOTIDE SEQUENCE [LARGE SCALE GENOMIC DNA]</scope>
    <source>
        <strain>ATCC BAA-1116 / BB120</strain>
    </source>
</reference>
<comment type="function">
    <text evidence="1">Catalyzes the ATP-dependent amination of UTP to CTP with either L-glutamine or ammonia as the source of nitrogen. Regulates intracellular CTP levels through interactions with the four ribonucleotide triphosphates.</text>
</comment>
<comment type="catalytic activity">
    <reaction evidence="1">
        <text>UTP + L-glutamine + ATP + H2O = CTP + L-glutamate + ADP + phosphate + 2 H(+)</text>
        <dbReference type="Rhea" id="RHEA:26426"/>
        <dbReference type="ChEBI" id="CHEBI:15377"/>
        <dbReference type="ChEBI" id="CHEBI:15378"/>
        <dbReference type="ChEBI" id="CHEBI:29985"/>
        <dbReference type="ChEBI" id="CHEBI:30616"/>
        <dbReference type="ChEBI" id="CHEBI:37563"/>
        <dbReference type="ChEBI" id="CHEBI:43474"/>
        <dbReference type="ChEBI" id="CHEBI:46398"/>
        <dbReference type="ChEBI" id="CHEBI:58359"/>
        <dbReference type="ChEBI" id="CHEBI:456216"/>
        <dbReference type="EC" id="6.3.4.2"/>
    </reaction>
</comment>
<comment type="catalytic activity">
    <reaction evidence="1">
        <text>L-glutamine + H2O = L-glutamate + NH4(+)</text>
        <dbReference type="Rhea" id="RHEA:15889"/>
        <dbReference type="ChEBI" id="CHEBI:15377"/>
        <dbReference type="ChEBI" id="CHEBI:28938"/>
        <dbReference type="ChEBI" id="CHEBI:29985"/>
        <dbReference type="ChEBI" id="CHEBI:58359"/>
    </reaction>
</comment>
<comment type="catalytic activity">
    <reaction evidence="1">
        <text>UTP + NH4(+) + ATP = CTP + ADP + phosphate + 2 H(+)</text>
        <dbReference type="Rhea" id="RHEA:16597"/>
        <dbReference type="ChEBI" id="CHEBI:15378"/>
        <dbReference type="ChEBI" id="CHEBI:28938"/>
        <dbReference type="ChEBI" id="CHEBI:30616"/>
        <dbReference type="ChEBI" id="CHEBI:37563"/>
        <dbReference type="ChEBI" id="CHEBI:43474"/>
        <dbReference type="ChEBI" id="CHEBI:46398"/>
        <dbReference type="ChEBI" id="CHEBI:456216"/>
    </reaction>
</comment>
<comment type="activity regulation">
    <text evidence="1">Allosterically activated by GTP, when glutamine is the substrate; GTP has no effect on the reaction when ammonia is the substrate. The allosteric effector GTP functions by stabilizing the protein conformation that binds the tetrahedral intermediate(s) formed during glutamine hydrolysis. Inhibited by the product CTP, via allosteric rather than competitive inhibition.</text>
</comment>
<comment type="pathway">
    <text evidence="1">Pyrimidine metabolism; CTP biosynthesis via de novo pathway; CTP from UDP: step 2/2.</text>
</comment>
<comment type="subunit">
    <text evidence="1">Homotetramer.</text>
</comment>
<comment type="miscellaneous">
    <text evidence="1">CTPSs have evolved a hybrid strategy for distinguishing between UTP and CTP. The overlapping regions of the product feedback inhibitory and substrate sites recognize a common feature in both compounds, the triphosphate moiety. To differentiate isosteric substrate and product pyrimidine rings, an additional pocket far from the expected kinase/ligase catalytic site, specifically recognizes the cytosine and ribose portions of the product inhibitor.</text>
</comment>
<comment type="similarity">
    <text evidence="1">Belongs to the CTP synthase family.</text>
</comment>
<organism>
    <name type="scientific">Vibrio campbellii (strain ATCC BAA-1116)</name>
    <dbReference type="NCBI Taxonomy" id="2902295"/>
    <lineage>
        <taxon>Bacteria</taxon>
        <taxon>Pseudomonadati</taxon>
        <taxon>Pseudomonadota</taxon>
        <taxon>Gammaproteobacteria</taxon>
        <taxon>Vibrionales</taxon>
        <taxon>Vibrionaceae</taxon>
        <taxon>Vibrio</taxon>
    </lineage>
</organism>
<evidence type="ECO:0000255" key="1">
    <source>
        <dbReference type="HAMAP-Rule" id="MF_01227"/>
    </source>
</evidence>